<sequence>MYCTHLKTLQLVVMATLWVTPVRAGTDCRYGCRLNNMTITVEREDCHGSITITTCAGLCETTDLNYQSTWLPRSQGVCNFKEWSYEKVYLEGCPSGVEPFFIPVAKSCDCIKCKTDNTDCDRKSMATPSCIVNPLEM</sequence>
<dbReference type="EMBL" id="S69275">
    <property type="protein sequence ID" value="AAB30423.1"/>
    <property type="molecule type" value="mRNA"/>
</dbReference>
<dbReference type="PIR" id="I51231">
    <property type="entry name" value="I51231"/>
</dbReference>
<dbReference type="SMR" id="P48252"/>
<dbReference type="GlyCosmos" id="P48252">
    <property type="glycosylation" value="1 site, No reported glycans"/>
</dbReference>
<dbReference type="GO" id="GO:0005737">
    <property type="term" value="C:cytoplasm"/>
    <property type="evidence" value="ECO:0007669"/>
    <property type="project" value="TreeGrafter"/>
</dbReference>
<dbReference type="GO" id="GO:0005615">
    <property type="term" value="C:extracellular space"/>
    <property type="evidence" value="ECO:0007669"/>
    <property type="project" value="TreeGrafter"/>
</dbReference>
<dbReference type="GO" id="GO:0005179">
    <property type="term" value="F:hormone activity"/>
    <property type="evidence" value="ECO:0007669"/>
    <property type="project" value="UniProtKB-KW"/>
</dbReference>
<dbReference type="GO" id="GO:0007186">
    <property type="term" value="P:G protein-coupled receptor signaling pathway"/>
    <property type="evidence" value="ECO:0007669"/>
    <property type="project" value="TreeGrafter"/>
</dbReference>
<dbReference type="GO" id="GO:0030728">
    <property type="term" value="P:ovulation"/>
    <property type="evidence" value="ECO:0007669"/>
    <property type="project" value="TreeGrafter"/>
</dbReference>
<dbReference type="CDD" id="cd00069">
    <property type="entry name" value="GHB_like"/>
    <property type="match status" value="1"/>
</dbReference>
<dbReference type="FunFam" id="2.10.90.10:FF:000007">
    <property type="entry name" value="Luteinizing hormone beta subunit"/>
    <property type="match status" value="1"/>
</dbReference>
<dbReference type="Gene3D" id="2.10.90.10">
    <property type="entry name" value="Cystine-knot cytokines"/>
    <property type="match status" value="1"/>
</dbReference>
<dbReference type="InterPro" id="IPR029034">
    <property type="entry name" value="Cystine-knot_cytokine"/>
</dbReference>
<dbReference type="InterPro" id="IPR006208">
    <property type="entry name" value="Glyco_hormone_CN"/>
</dbReference>
<dbReference type="InterPro" id="IPR001545">
    <property type="entry name" value="Gonadotropin_bsu"/>
</dbReference>
<dbReference type="InterPro" id="IPR018245">
    <property type="entry name" value="Gonadotropin_bsu_CS"/>
</dbReference>
<dbReference type="PANTHER" id="PTHR11515">
    <property type="entry name" value="GLYCOPROTEIN HORMONE BETA CHAIN"/>
    <property type="match status" value="1"/>
</dbReference>
<dbReference type="PANTHER" id="PTHR11515:SF11">
    <property type="entry name" value="LUTROPIN SUBUNIT BETA"/>
    <property type="match status" value="1"/>
</dbReference>
<dbReference type="Pfam" id="PF00007">
    <property type="entry name" value="Cys_knot"/>
    <property type="match status" value="1"/>
</dbReference>
<dbReference type="SMART" id="SM00068">
    <property type="entry name" value="GHB"/>
    <property type="match status" value="1"/>
</dbReference>
<dbReference type="SUPFAM" id="SSF57501">
    <property type="entry name" value="Cystine-knot cytokines"/>
    <property type="match status" value="1"/>
</dbReference>
<dbReference type="PROSITE" id="PS00261">
    <property type="entry name" value="GLYCO_HORMONE_BETA_1"/>
    <property type="match status" value="1"/>
</dbReference>
<dbReference type="PROSITE" id="PS00689">
    <property type="entry name" value="GLYCO_HORMONE_BETA_2"/>
    <property type="match status" value="1"/>
</dbReference>
<comment type="function">
    <text>Involved in gametogenesis and steroidogenesis.</text>
</comment>
<comment type="subunit">
    <text>Heterodimer of an alpha and a beta chain.</text>
</comment>
<comment type="subcellular location">
    <subcellularLocation>
        <location>Secreted</location>
    </subcellularLocation>
</comment>
<comment type="similarity">
    <text evidence="3">Belongs to the glycoprotein hormones subunit beta family.</text>
</comment>
<gene>
    <name type="primary">cgba</name>
</gene>
<feature type="signal peptide" evidence="1">
    <location>
        <begin position="1"/>
        <end position="24"/>
    </location>
</feature>
<feature type="chain" id="PRO_0000011701" description="Gonadotropin subunit beta-1">
    <location>
        <begin position="25"/>
        <end position="137"/>
    </location>
</feature>
<feature type="glycosylation site" description="N-linked (GlcNAc...) asparagine" evidence="2">
    <location>
        <position position="36"/>
    </location>
</feature>
<feature type="disulfide bond" evidence="1">
    <location>
        <begin position="32"/>
        <end position="78"/>
    </location>
</feature>
<feature type="disulfide bond" evidence="1">
    <location>
        <begin position="46"/>
        <end position="93"/>
    </location>
</feature>
<feature type="disulfide bond" evidence="1">
    <location>
        <begin position="55"/>
        <end position="108"/>
    </location>
</feature>
<feature type="disulfide bond" evidence="1">
    <location>
        <begin position="59"/>
        <end position="110"/>
    </location>
</feature>
<feature type="disulfide bond" evidence="1">
    <location>
        <begin position="113"/>
        <end position="120"/>
    </location>
</feature>
<proteinExistence type="evidence at transcript level"/>
<name>GTHB1_ONCMA</name>
<evidence type="ECO:0000250" key="1"/>
<evidence type="ECO:0000255" key="2"/>
<evidence type="ECO:0000305" key="3"/>
<reference key="1">
    <citation type="journal article" date="1993" name="J. Mol. Endocrinol.">
        <title>Molecular cloning of cDNAs encoding two gonadotrophin beta subunits (GTH-I beta and -II beta) from the masu salmon, Oncorhynchus masou: rapid divergence of the GTH-I beta gene.</title>
        <authorList>
            <person name="Kato Y."/>
            <person name="Gen K."/>
            <person name="Maruyama O."/>
            <person name="Tomizawa K."/>
            <person name="Kato T."/>
        </authorList>
    </citation>
    <scope>NUCLEOTIDE SEQUENCE [MRNA]</scope>
    <source>
        <tissue>Pituitary</tissue>
    </source>
</reference>
<keyword id="KW-1015">Disulfide bond</keyword>
<keyword id="KW-0325">Glycoprotein</keyword>
<keyword id="KW-0372">Hormone</keyword>
<keyword id="KW-0964">Secreted</keyword>
<keyword id="KW-0732">Signal</keyword>
<accession>P48252</accession>
<organism>
    <name type="scientific">Oncorhynchus masou</name>
    <name type="common">Cherry salmon</name>
    <name type="synonym">Masu salmon</name>
    <dbReference type="NCBI Taxonomy" id="8020"/>
    <lineage>
        <taxon>Eukaryota</taxon>
        <taxon>Metazoa</taxon>
        <taxon>Chordata</taxon>
        <taxon>Craniata</taxon>
        <taxon>Vertebrata</taxon>
        <taxon>Euteleostomi</taxon>
        <taxon>Actinopterygii</taxon>
        <taxon>Neopterygii</taxon>
        <taxon>Teleostei</taxon>
        <taxon>Protacanthopterygii</taxon>
        <taxon>Salmoniformes</taxon>
        <taxon>Salmonidae</taxon>
        <taxon>Salmoninae</taxon>
        <taxon>Oncorhynchus</taxon>
    </lineage>
</organism>
<protein>
    <recommendedName>
        <fullName>Gonadotropin subunit beta-1</fullName>
    </recommendedName>
    <alternativeName>
        <fullName>GTH-I-beta</fullName>
    </alternativeName>
    <alternativeName>
        <fullName>Gonadotropin beta-I chain</fullName>
    </alternativeName>
</protein>